<feature type="chain" id="PRO_0000311624" description="Matrix protein 2">
    <location>
        <begin position="1"/>
        <end position="100"/>
    </location>
</feature>
<feature type="topological domain" description="Virion surface" evidence="1">
    <location>
        <begin position="1"/>
        <end position="25"/>
    </location>
</feature>
<feature type="transmembrane region" description="Helical; Signal-anchor for type III membrane protein" evidence="1">
    <location>
        <begin position="26"/>
        <end position="46"/>
    </location>
</feature>
<feature type="topological domain" description="Intravirion" evidence="1">
    <location>
        <begin position="47"/>
        <end position="100"/>
    </location>
</feature>
<feature type="region of interest" description="Disordered" evidence="2">
    <location>
        <begin position="63"/>
        <end position="86"/>
    </location>
</feature>
<feature type="site" description="Essential for channel activity, possibly by being protonated during channel activation, and by forming the channel gate and the selective filter" evidence="1">
    <location>
        <position position="40"/>
    </location>
</feature>
<feature type="site" description="Seems to be involved in pH gating" evidence="1">
    <location>
        <position position="44"/>
    </location>
</feature>
<feature type="modified residue" description="Phosphoserine; by host" evidence="1">
    <location>
        <position position="67"/>
    </location>
</feature>
<feature type="modified residue" description="Phosphoserine; by host" evidence="1">
    <location>
        <position position="85"/>
    </location>
</feature>
<feature type="lipid moiety-binding region" description="S-palmitoyl cysteine; by host" evidence="1">
    <location>
        <position position="53"/>
    </location>
</feature>
<feature type="disulfide bond" description="Interchain (with C-20)" evidence="1">
    <location>
        <position position="20"/>
    </location>
</feature>
<feature type="disulfide bond" description="Interchain (with C-22)" evidence="1">
    <location>
        <position position="22"/>
    </location>
</feature>
<organism>
    <name type="scientific">Influenza A virus (strain A/Chicken/Hong Kong/FY150/2001 H5N1 genotype D)</name>
    <dbReference type="NCBI Taxonomy" id="222142"/>
    <lineage>
        <taxon>Viruses</taxon>
        <taxon>Riboviria</taxon>
        <taxon>Orthornavirae</taxon>
        <taxon>Negarnaviricota</taxon>
        <taxon>Polyploviricotina</taxon>
        <taxon>Insthoviricetes</taxon>
        <taxon>Articulavirales</taxon>
        <taxon>Orthomyxoviridae</taxon>
        <taxon>Alphainfluenzavirus</taxon>
        <taxon>Alphainfluenzavirus influenzae</taxon>
        <taxon>Influenza A virus</taxon>
    </lineage>
</organism>
<protein>
    <recommendedName>
        <fullName evidence="1">Matrix protein 2</fullName>
    </recommendedName>
    <alternativeName>
        <fullName evidence="1">Proton channel protein M2</fullName>
    </alternativeName>
</protein>
<evidence type="ECO:0000255" key="1">
    <source>
        <dbReference type="HAMAP-Rule" id="MF_04069"/>
    </source>
</evidence>
<evidence type="ECO:0000256" key="2">
    <source>
        <dbReference type="SAM" id="MobiDB-lite"/>
    </source>
</evidence>
<proteinExistence type="inferred from homology"/>
<keyword id="KW-0025">Alternative splicing</keyword>
<keyword id="KW-1015">Disulfide bond</keyword>
<keyword id="KW-1032">Host cell membrane</keyword>
<keyword id="KW-1043">Host membrane</keyword>
<keyword id="KW-0945">Host-virus interaction</keyword>
<keyword id="KW-0375">Hydrogen ion transport</keyword>
<keyword id="KW-1083">Inhibition of host autophagy by virus</keyword>
<keyword id="KW-0407">Ion channel</keyword>
<keyword id="KW-0406">Ion transport</keyword>
<keyword id="KW-0449">Lipoprotein</keyword>
<keyword id="KW-0472">Membrane</keyword>
<keyword id="KW-0564">Palmitate</keyword>
<keyword id="KW-0597">Phosphoprotein</keyword>
<keyword id="KW-0735">Signal-anchor</keyword>
<keyword id="KW-0812">Transmembrane</keyword>
<keyword id="KW-1133">Transmembrane helix</keyword>
<keyword id="KW-0813">Transport</keyword>
<keyword id="KW-1182">Viral ion channel</keyword>
<keyword id="KW-0946">Virion</keyword>
<dbReference type="EMBL" id="AF509043">
    <property type="status" value="NOT_ANNOTATED_CDS"/>
    <property type="molecule type" value="Genomic_DNA"/>
</dbReference>
<dbReference type="SMR" id="P0C5T2"/>
<dbReference type="GO" id="GO:0020002">
    <property type="term" value="C:host cell plasma membrane"/>
    <property type="evidence" value="ECO:0007669"/>
    <property type="project" value="UniProtKB-SubCell"/>
</dbReference>
<dbReference type="GO" id="GO:0016020">
    <property type="term" value="C:membrane"/>
    <property type="evidence" value="ECO:0007669"/>
    <property type="project" value="UniProtKB-UniRule"/>
</dbReference>
<dbReference type="GO" id="GO:0055036">
    <property type="term" value="C:virion membrane"/>
    <property type="evidence" value="ECO:0007669"/>
    <property type="project" value="UniProtKB-SubCell"/>
</dbReference>
<dbReference type="GO" id="GO:0005216">
    <property type="term" value="F:monoatomic ion channel activity"/>
    <property type="evidence" value="ECO:0007669"/>
    <property type="project" value="UniProtKB-UniRule"/>
</dbReference>
<dbReference type="GO" id="GO:0015078">
    <property type="term" value="F:proton transmembrane transporter activity"/>
    <property type="evidence" value="ECO:0007669"/>
    <property type="project" value="UniProtKB-UniRule"/>
</dbReference>
<dbReference type="GO" id="GO:0051259">
    <property type="term" value="P:protein complex oligomerization"/>
    <property type="evidence" value="ECO:0007669"/>
    <property type="project" value="UniProtKB-UniRule"/>
</dbReference>
<dbReference type="GO" id="GO:0044694">
    <property type="term" value="P:symbiont genome entry into host cell via pore formation in plasma membrane"/>
    <property type="evidence" value="ECO:0007669"/>
    <property type="project" value="UniProtKB-UniRule"/>
</dbReference>
<dbReference type="GO" id="GO:0140321">
    <property type="term" value="P:symbiont-mediated suppression of host autophagy"/>
    <property type="evidence" value="ECO:0007669"/>
    <property type="project" value="UniProtKB-KW"/>
</dbReference>
<dbReference type="Gene3D" id="6.10.250.1640">
    <property type="match status" value="1"/>
</dbReference>
<dbReference type="HAMAP" id="MF_04069">
    <property type="entry name" value="INFV_M2"/>
    <property type="match status" value="1"/>
</dbReference>
<dbReference type="InterPro" id="IPR002089">
    <property type="entry name" value="Flu_M2"/>
</dbReference>
<dbReference type="Pfam" id="PF00599">
    <property type="entry name" value="Flu_M2"/>
    <property type="match status" value="1"/>
</dbReference>
<organismHost>
    <name type="scientific">Aves</name>
    <dbReference type="NCBI Taxonomy" id="8782"/>
</organismHost>
<organismHost>
    <name type="scientific">Felis catus</name>
    <name type="common">Cat</name>
    <name type="synonym">Felis silvestris catus</name>
    <dbReference type="NCBI Taxonomy" id="9685"/>
</organismHost>
<organismHost>
    <name type="scientific">Homo sapiens</name>
    <name type="common">Human</name>
    <dbReference type="NCBI Taxonomy" id="9606"/>
</organismHost>
<organismHost>
    <name type="scientific">Panthera pardus</name>
    <name type="common">Leopard</name>
    <name type="synonym">Felis pardus</name>
    <dbReference type="NCBI Taxonomy" id="9691"/>
</organismHost>
<organismHost>
    <name type="scientific">Panthera tigris</name>
    <name type="common">Tiger</name>
    <dbReference type="NCBI Taxonomy" id="9694"/>
</organismHost>
<organismHost>
    <name type="scientific">Sus scrofa</name>
    <name type="common">Pig</name>
    <dbReference type="NCBI Taxonomy" id="9823"/>
</organismHost>
<name>M2_I01A2</name>
<reference key="1">
    <citation type="journal article" date="2002" name="Proc. Natl. Acad. Sci. U.S.A.">
        <title>Emergence of multiple genotypes of H5N1 avian influenza viruses in Hong Kong SAR.</title>
        <authorList>
            <person name="Guan Y."/>
            <person name="Peiris J.S.M."/>
            <person name="Lipatov A.S."/>
            <person name="Ellis T.M."/>
            <person name="Dyrting K.C."/>
            <person name="Krauss S."/>
            <person name="Zhang L.J."/>
            <person name="Webster R.G."/>
            <person name="Shortridge K.F."/>
        </authorList>
    </citation>
    <scope>NUCLEOTIDE SEQUENCE [GENOMIC RNA]</scope>
</reference>
<gene>
    <name evidence="1" type="primary">M</name>
</gene>
<accession>P0C5T2</accession>
<comment type="function">
    <text evidence="1">Forms a proton-selective ion channel that is necessary for the efficient release of the viral genome during virus entry. After attaching to the cell surface, the virion enters the cell by endocytosis. Acidification of the endosome triggers M2 ion channel activity. The influx of protons into virion interior is believed to disrupt interactions between the viral ribonucleoprotein (RNP), matrix protein 1 (M1), and lipid bilayers, thereby freeing the viral genome from interaction with viral proteins and enabling RNA segments to migrate to the host cell nucleus, where influenza virus RNA transcription and replication occur. Also plays a role in viral proteins secretory pathway. Elevates the intravesicular pH of normally acidic compartments, such as trans-Golgi network, preventing newly formed hemagglutinin from premature switching to the fusion-active conformation.</text>
</comment>
<comment type="activity regulation">
    <text>The M2 protein from most influenza A strains is inhibited by amantadine and rimantadine, resulting in viral uncoating incapacity. Emergence of amantadine-resistant variants is usually rapid.</text>
</comment>
<comment type="subunit">
    <text evidence="1">Homotetramer; composed of two disulfide-linked dimers held together by non-covalent interactions. May interact with matrix protein 1.</text>
</comment>
<comment type="subcellular location">
    <subcellularLocation>
        <location evidence="1">Virion membrane</location>
    </subcellularLocation>
    <subcellularLocation>
        <location evidence="1">Host apical cell membrane</location>
        <topology evidence="1">Single-pass type III membrane protein</topology>
    </subcellularLocation>
    <text evidence="1">Abundantly expressed at the apical plasma membrane in infected polarized epithelial cells, in close proximity to budding and assembled virions. Minor component of virions (only 16-20 molecules/virion).</text>
</comment>
<comment type="alternative products">
    <event type="alternative splicing"/>
    <isoform>
        <id>P0C5T2-1</id>
        <name>M2</name>
        <sequence type="displayed"/>
    </isoform>
    <isoform>
        <id>Q80A04-1</id>
        <name>M1</name>
        <sequence type="external"/>
    </isoform>
    <text>Only the first 9 residues are shared by the 2 isoforms.</text>
</comment>
<comment type="domain">
    <text evidence="1">Cytoplasmic tail plays an important role in virion assembly and morphogenesis.</text>
</comment>
<comment type="miscellaneous">
    <text evidence="1">When the channel is activated, one or more imidazole moieties of His-40 probably become bi-protonated.</text>
</comment>
<comment type="similarity">
    <text evidence="1">Belongs to the influenza viruses matrix protein M2 family.</text>
</comment>
<sequence length="100" mass="11577">MSLLTEVETYVLPTRNEWECRCSGSSDPLVVASSIIGILHLILWILDRLFFKCIYRRLKYGLKRGPSTEGVPESMREEYRQEQQSAVDVDDGHFVNIELE</sequence>